<sequence length="138" mass="15422">MRIMGLDVGSKTVGVAISDPLGWTAQGVETIQIDENRKQFGYDRVKELVLEYEVEKVVVGLPKNMNNTIGPRAESSKIYAEVLESRIGLPVVLWDERLTTSAAERTLIEADVSRKKRKEVIDKLAAVMILQSYLDTTN</sequence>
<organism>
    <name type="scientific">Listeria monocytogenes serotype 4b (strain CLIP80459)</name>
    <dbReference type="NCBI Taxonomy" id="568819"/>
    <lineage>
        <taxon>Bacteria</taxon>
        <taxon>Bacillati</taxon>
        <taxon>Bacillota</taxon>
        <taxon>Bacilli</taxon>
        <taxon>Bacillales</taxon>
        <taxon>Listeriaceae</taxon>
        <taxon>Listeria</taxon>
    </lineage>
</organism>
<name>YQGF_LISMC</name>
<evidence type="ECO:0000255" key="1">
    <source>
        <dbReference type="HAMAP-Rule" id="MF_00651"/>
    </source>
</evidence>
<comment type="function">
    <text evidence="1">Could be a nuclease involved in processing of the 5'-end of pre-16S rRNA.</text>
</comment>
<comment type="subcellular location">
    <subcellularLocation>
        <location evidence="1">Cytoplasm</location>
    </subcellularLocation>
</comment>
<comment type="similarity">
    <text evidence="1">Belongs to the YqgF nuclease family.</text>
</comment>
<proteinExistence type="inferred from homology"/>
<gene>
    <name type="ordered locus">Lm4b_01512</name>
</gene>
<dbReference type="EC" id="3.1.-.-" evidence="1"/>
<dbReference type="EMBL" id="FM242711">
    <property type="protein sequence ID" value="CAS05274.1"/>
    <property type="molecule type" value="Genomic_DNA"/>
</dbReference>
<dbReference type="SMR" id="C1KVE9"/>
<dbReference type="KEGG" id="lmc:Lm4b_01512"/>
<dbReference type="HOGENOM" id="CLU_098240_2_0_9"/>
<dbReference type="GO" id="GO:0005829">
    <property type="term" value="C:cytosol"/>
    <property type="evidence" value="ECO:0007669"/>
    <property type="project" value="TreeGrafter"/>
</dbReference>
<dbReference type="GO" id="GO:0004518">
    <property type="term" value="F:nuclease activity"/>
    <property type="evidence" value="ECO:0007669"/>
    <property type="project" value="UniProtKB-KW"/>
</dbReference>
<dbReference type="GO" id="GO:0000967">
    <property type="term" value="P:rRNA 5'-end processing"/>
    <property type="evidence" value="ECO:0007669"/>
    <property type="project" value="UniProtKB-UniRule"/>
</dbReference>
<dbReference type="CDD" id="cd16964">
    <property type="entry name" value="YqgF"/>
    <property type="match status" value="1"/>
</dbReference>
<dbReference type="FunFam" id="3.30.420.140:FF:000003">
    <property type="entry name" value="Putative pre-16S rRNA nuclease"/>
    <property type="match status" value="1"/>
</dbReference>
<dbReference type="Gene3D" id="3.30.420.140">
    <property type="entry name" value="YqgF/RNase H-like domain"/>
    <property type="match status" value="1"/>
</dbReference>
<dbReference type="HAMAP" id="MF_00651">
    <property type="entry name" value="Nuclease_YqgF"/>
    <property type="match status" value="1"/>
</dbReference>
<dbReference type="InterPro" id="IPR012337">
    <property type="entry name" value="RNaseH-like_sf"/>
</dbReference>
<dbReference type="InterPro" id="IPR005227">
    <property type="entry name" value="YqgF"/>
</dbReference>
<dbReference type="InterPro" id="IPR006641">
    <property type="entry name" value="YqgF/RNaseH-like_dom"/>
</dbReference>
<dbReference type="InterPro" id="IPR037027">
    <property type="entry name" value="YqgF/RNaseH-like_dom_sf"/>
</dbReference>
<dbReference type="NCBIfam" id="TIGR00250">
    <property type="entry name" value="RNAse_H_YqgF"/>
    <property type="match status" value="1"/>
</dbReference>
<dbReference type="PANTHER" id="PTHR33317">
    <property type="entry name" value="POLYNUCLEOTIDYL TRANSFERASE, RIBONUCLEASE H-LIKE SUPERFAMILY PROTEIN"/>
    <property type="match status" value="1"/>
</dbReference>
<dbReference type="PANTHER" id="PTHR33317:SF4">
    <property type="entry name" value="POLYNUCLEOTIDYL TRANSFERASE, RIBONUCLEASE H-LIKE SUPERFAMILY PROTEIN"/>
    <property type="match status" value="1"/>
</dbReference>
<dbReference type="Pfam" id="PF03652">
    <property type="entry name" value="RuvX"/>
    <property type="match status" value="1"/>
</dbReference>
<dbReference type="SMART" id="SM00732">
    <property type="entry name" value="YqgFc"/>
    <property type="match status" value="1"/>
</dbReference>
<dbReference type="SUPFAM" id="SSF53098">
    <property type="entry name" value="Ribonuclease H-like"/>
    <property type="match status" value="1"/>
</dbReference>
<protein>
    <recommendedName>
        <fullName evidence="1">Putative pre-16S rRNA nuclease</fullName>
        <ecNumber evidence="1">3.1.-.-</ecNumber>
    </recommendedName>
</protein>
<feature type="chain" id="PRO_1000212414" description="Putative pre-16S rRNA nuclease">
    <location>
        <begin position="1"/>
        <end position="138"/>
    </location>
</feature>
<accession>C1KVE9</accession>
<reference key="1">
    <citation type="journal article" date="2012" name="BMC Genomics">
        <title>Comparative genomics and transcriptomics of lineages I, II, and III strains of Listeria monocytogenes.</title>
        <authorList>
            <person name="Hain T."/>
            <person name="Ghai R."/>
            <person name="Billion A."/>
            <person name="Kuenne C.T."/>
            <person name="Steinweg C."/>
            <person name="Izar B."/>
            <person name="Mohamed W."/>
            <person name="Mraheil M."/>
            <person name="Domann E."/>
            <person name="Schaffrath S."/>
            <person name="Karst U."/>
            <person name="Goesmann A."/>
            <person name="Oehm S."/>
            <person name="Puhler A."/>
            <person name="Merkl R."/>
            <person name="Vorwerk S."/>
            <person name="Glaser P."/>
            <person name="Garrido P."/>
            <person name="Rusniok C."/>
            <person name="Buchrieser C."/>
            <person name="Goebel W."/>
            <person name="Chakraborty T."/>
        </authorList>
    </citation>
    <scope>NUCLEOTIDE SEQUENCE [LARGE SCALE GENOMIC DNA]</scope>
    <source>
        <strain>CLIP80459</strain>
    </source>
</reference>
<keyword id="KW-0963">Cytoplasm</keyword>
<keyword id="KW-0378">Hydrolase</keyword>
<keyword id="KW-0540">Nuclease</keyword>
<keyword id="KW-0690">Ribosome biogenesis</keyword>